<dbReference type="EMBL" id="J01917">
    <property type="status" value="NOT_ANNOTATED_CDS"/>
    <property type="molecule type" value="Genomic_DNA"/>
</dbReference>
<dbReference type="RefSeq" id="AP_000186.1">
    <property type="nucleotide sequence ID" value="AC_000007.1"/>
</dbReference>
<dbReference type="SMR" id="P15133"/>
<dbReference type="Proteomes" id="UP000008167">
    <property type="component" value="Segment"/>
</dbReference>
<dbReference type="GO" id="GO:0044165">
    <property type="term" value="C:host cell endoplasmic reticulum"/>
    <property type="evidence" value="ECO:0007669"/>
    <property type="project" value="UniProtKB-SubCell"/>
</dbReference>
<dbReference type="GO" id="GO:0033644">
    <property type="term" value="C:host cell membrane"/>
    <property type="evidence" value="ECO:0007669"/>
    <property type="project" value="UniProtKB-SubCell"/>
</dbReference>
<dbReference type="GO" id="GO:0016020">
    <property type="term" value="C:membrane"/>
    <property type="evidence" value="ECO:0007669"/>
    <property type="project" value="UniProtKB-KW"/>
</dbReference>
<dbReference type="InterPro" id="IPR005041">
    <property type="entry name" value="Adeno_E3B"/>
</dbReference>
<dbReference type="Pfam" id="PF03376">
    <property type="entry name" value="Adeno_E3B"/>
    <property type="match status" value="1"/>
</dbReference>
<organismHost>
    <name type="scientific">Homo sapiens</name>
    <name type="common">Human</name>
    <dbReference type="NCBI Taxonomy" id="9606"/>
</organismHost>
<accession>P15133</accession>
<feature type="chain" id="PRO_0000421689" description="Pre-early 3 receptor internalization and degradation alpha protein">
    <location>
        <begin position="1"/>
        <end position="91"/>
    </location>
</feature>
<feature type="propeptide" id="PRO_0000421690" description="Signal peptide">
    <location>
        <begin position="1"/>
        <end position="22"/>
    </location>
</feature>
<feature type="chain" id="PRO_0000036470" description="Early 3 receptor internalization and degradation alpha protein">
    <location>
        <begin position="23"/>
        <end position="91"/>
    </location>
</feature>
<feature type="topological domain" description="Cytoplasmic" evidence="1">
    <location>
        <begin position="1"/>
        <end position="4"/>
    </location>
</feature>
<feature type="transmembrane region" description="Helical; Name=TM1" evidence="1">
    <location>
        <begin position="5"/>
        <end position="25"/>
    </location>
</feature>
<feature type="topological domain" description="Lumenal" evidence="1">
    <location>
        <begin position="26"/>
        <end position="34"/>
    </location>
</feature>
<feature type="transmembrane region" description="Helical" evidence="1">
    <location>
        <begin position="35"/>
        <end position="60"/>
    </location>
</feature>
<feature type="topological domain" description="Cytoplasmic" evidence="1">
    <location>
        <begin position="61"/>
        <end position="91"/>
    </location>
</feature>
<feature type="site" description="Cleavage; by host signal peptidase">
    <location>
        <begin position="22"/>
        <end position="23"/>
    </location>
</feature>
<feature type="disulfide bond" description="Interchain (with C-31 in Early 3 receptor internalization and degradation alpha protein)">
    <location>
        <position position="31"/>
    </location>
</feature>
<feature type="mutagenesis site" description="Complete loss of disulfide bonding." evidence="2">
    <original>C</original>
    <variation>S</variation>
    <location>
        <position position="31"/>
    </location>
</feature>
<keyword id="KW-1015">Disulfide bond</keyword>
<keyword id="KW-0244">Early protein</keyword>
<keyword id="KW-1038">Host endoplasmic reticulum</keyword>
<keyword id="KW-1043">Host membrane</keyword>
<keyword id="KW-0472">Membrane</keyword>
<keyword id="KW-1185">Reference proteome</keyword>
<keyword id="KW-0812">Transmembrane</keyword>
<keyword id="KW-1133">Transmembrane helix</keyword>
<name>E3RDA_ADE02</name>
<organism>
    <name type="scientific">Human adenovirus C serotype 2</name>
    <name type="common">HAdV-2</name>
    <name type="synonym">Human adenovirus 2</name>
    <dbReference type="NCBI Taxonomy" id="10515"/>
    <lineage>
        <taxon>Viruses</taxon>
        <taxon>Varidnaviria</taxon>
        <taxon>Bamfordvirae</taxon>
        <taxon>Preplasmiviricota</taxon>
        <taxon>Tectiliviricetes</taxon>
        <taxon>Rowavirales</taxon>
        <taxon>Adenoviridae</taxon>
        <taxon>Mastadenovirus</taxon>
        <taxon>Human mastadenovirus C</taxon>
    </lineage>
</organism>
<reference key="1">
    <citation type="journal article" date="1980" name="Nucleic Acids Res.">
        <title>Nucleotide sequence of the EcoRI D fragment of adenovirus 2 genome.</title>
        <authorList>
            <person name="Herisse J."/>
            <person name="Courtois G."/>
            <person name="Galibert F."/>
        </authorList>
    </citation>
    <scope>NUCLEOTIDE SEQUENCE [GENOMIC DNA]</scope>
</reference>
<reference key="2">
    <citation type="journal article" date="1992" name="J. Biol. Chem.">
        <title>Characterization of the adenovirus E3 protein that down-regulates the epidermal growth factor receptor. Evidence for intermolecular disulfide bonding and plasma membrane localization.</title>
        <authorList>
            <person name="Hoffman P."/>
            <person name="Yaffe M.B."/>
            <person name="Hoffman B.L."/>
            <person name="Yei S."/>
            <person name="Wold W.S."/>
            <person name="Carlin C."/>
        </authorList>
    </citation>
    <scope>SUBUNIT</scope>
    <scope>MUTAGENESIS OF CYS-31</scope>
</reference>
<reference key="3">
    <citation type="journal article" date="1992" name="Virology">
        <title>The E3-10.4K protein of adenovirus is an integral membrane protein that is partially cleaved between Ala22 and Ala23 and has a Ccyt orientation.</title>
        <authorList>
            <person name="Krajsci P."/>
            <person name="Tollefson A.E."/>
            <person name="Anderson C.W."/>
            <person name="Stewart A.R."/>
            <person name="Carlin C.R."/>
            <person name="Wold W.S.M."/>
        </authorList>
    </citation>
    <scope>SIGNAL SEQUENCE CLEAVAGE SITE</scope>
    <scope>ALTERNATIVE PROCESSING</scope>
</reference>
<reference key="4">
    <citation type="journal article" date="2005" name="J. Virol.">
        <title>Mechanism for removal of tumor necrosis factor receptor 1 from the cell surface by the adenovirus RIDalpha/beta complex.</title>
        <authorList>
            <person name="Chin Y.R."/>
            <person name="Horwitz M.S."/>
        </authorList>
    </citation>
    <scope>FUNCTION</scope>
</reference>
<reference key="5">
    <citation type="journal article" date="2007" name="J. Cell Biol.">
        <title>Adenovirus RIDalpha regulates endosome maturation by mimicking GTP-Rab7.</title>
        <authorList>
            <person name="Shah A.H."/>
            <person name="Cianciola N.L."/>
            <person name="Mills J.L."/>
            <person name="Sonnichsen F.D."/>
            <person name="Carlin C."/>
        </authorList>
    </citation>
    <scope>FUNCTION</scope>
</reference>
<reference key="6">
    <citation type="journal article" date="2009" name="J. Cell Biol.">
        <title>Adenovirus RID-alpha activates an autonomous cholesterol regulatory mechanism that rescues defects linked to Niemann-Pick disease type C.</title>
        <authorList>
            <person name="Cianciola N.L."/>
            <person name="Carlin C.R."/>
        </authorList>
    </citation>
    <scope>FUNCTION</scope>
</reference>
<reference key="7">
    <citation type="journal article" date="2004" name="Int. Rev. Immunol.">
        <title>Functions and mechanisms of action of the adenovirus E3 proteins.</title>
        <authorList>
            <person name="Lichtenstein D.L."/>
            <person name="Toth K."/>
            <person name="Doronin K."/>
            <person name="Tollefson A.E."/>
            <person name="Wold W.S."/>
        </authorList>
    </citation>
    <scope>REVIEW</scope>
</reference>
<reference key="8">
    <citation type="journal article" date="2004" name="Curr. Top. Microbiol. Immunol.">
        <title>Immune evasion by adenovirus E3 proteins: exploitation of intracellular trafficking pathways.</title>
        <authorList>
            <person name="Windheim M."/>
            <person name="Hilgendorf A."/>
            <person name="Burgert H.G."/>
        </authorList>
    </citation>
    <scope>REVIEW</scope>
</reference>
<evidence type="ECO:0000255" key="1"/>
<evidence type="ECO:0000269" key="2">
    <source>
    </source>
</evidence>
<evidence type="ECO:0000269" key="3">
    <source>
    </source>
</evidence>
<evidence type="ECO:0000269" key="4">
    <source>
    </source>
</evidence>
<evidence type="ECO:0000269" key="5">
    <source>
    </source>
</evidence>
<evidence type="ECO:0000269" key="6">
    <source>
    </source>
</evidence>
<evidence type="ECO:0000305" key="7"/>
<proteinExistence type="evidence at protein level"/>
<comment type="function">
    <text evidence="4 5 6">Prevents infected cell apoptosis induced by the host immune system. Acts by down-regulating a number of cell surface receptors in the tumor necrosis factor (TNF) receptor superfamily, namely FAS, TNFRSF10A/TRAIL receptor 1, and TNFRSF10B/TRAIL receptor 2. Down-regulation of these death receptors protects adenovirus-infected cells from apoptosis induced by the death receptor ligands Fas ligand and TRAIL. RID complex also down-regulates certain tyrosine kinase cell surface receptors, especially the epidermal growth factor receptor (EGFR). RID-mediated Fas and EGFR down-regulation occurs via endocytosis of the receptors into endosomes followed by transport to and degradation within lysosomes.</text>
</comment>
<comment type="subunit">
    <text evidence="2">Homodimer with only one chain cleaved by signal peptidase. Interacts with E3 RID-beta and E3 CR1-alpha.</text>
</comment>
<comment type="subcellular location">
    <molecule>Pre-early 3 receptor internalization and degradation alpha protein</molecule>
    <subcellularLocation>
        <location>Host membrane</location>
        <topology>Multi-pass membrane protein</topology>
    </subcellularLocation>
    <subcellularLocation>
        <location>Host endoplasmic reticulum</location>
    </subcellularLocation>
</comment>
<comment type="subcellular location">
    <molecule>Early 3 receptor internalization and degradation alpha protein</molecule>
    <subcellularLocation>
        <location>Host membrane</location>
        <topology>Single-pass type I membrane protein</topology>
    </subcellularLocation>
    <subcellularLocation>
        <location>Host endoplasmic reticulum</location>
    </subcellularLocation>
</comment>
<comment type="PTM">
    <text evidence="3">The signal peptide is only cleaved partially by host signal peptidase. This results in two forms of the protein, one uncleaved with two transmembrane regions, and one cleaved with one transmembrane region (PubMed:1531278).</text>
</comment>
<comment type="similarity">
    <text evidence="7">Belongs to the adenoviridae E3-RID-alpha family.</text>
</comment>
<sequence length="91" mass="10375">MIPRVLILLTLVALFCACSTLAAVAHIEVDCIPPFTVYLLYGFVTLILICSLVTVVIAFIQFIDWVCVRIAYLRHHPQYRDRTIADLLRIL</sequence>
<protein>
    <recommendedName>
        <fullName>Pre-early 3 receptor internalization and degradation alpha protein</fullName>
        <shortName>Pre-E3-RID-alpha protein</shortName>
    </recommendedName>
    <component>
        <recommendedName>
            <fullName>Early 3 receptor internalization and degradation alpha protein</fullName>
            <shortName>E3-RID-alpha protein</shortName>
        </recommendedName>
        <alternativeName>
            <fullName>Pre-Early E3B 10.4 kDa protein</fullName>
        </alternativeName>
    </component>
</protein>